<keyword id="KW-0010">Activator</keyword>
<keyword id="KW-0238">DNA-binding</keyword>
<keyword id="KW-1185">Reference proteome</keyword>
<keyword id="KW-0804">Transcription</keyword>
<keyword id="KW-0805">Transcription regulation</keyword>
<protein>
    <recommendedName>
        <fullName>Sugar fermentation stimulation protein B</fullName>
    </recommendedName>
    <alternativeName>
        <fullName>Ner-like protein</fullName>
    </alternativeName>
</protein>
<name>SFSB_ECOLI</name>
<feature type="chain" id="PRO_0000062779" description="Sugar fermentation stimulation protein B">
    <location>
        <begin position="1"/>
        <end position="92"/>
    </location>
</feature>
<feature type="DNA-binding region" description="H-T-H motif" evidence="1">
    <location>
        <begin position="50"/>
        <end position="69"/>
    </location>
</feature>
<evidence type="ECO:0000250" key="1"/>
<evidence type="ECO:0000305" key="2"/>
<organism>
    <name type="scientific">Escherichia coli (strain K12)</name>
    <dbReference type="NCBI Taxonomy" id="83333"/>
    <lineage>
        <taxon>Bacteria</taxon>
        <taxon>Pseudomonadati</taxon>
        <taxon>Pseudomonadota</taxon>
        <taxon>Gammaproteobacteria</taxon>
        <taxon>Enterobacterales</taxon>
        <taxon>Enterobacteriaceae</taxon>
        <taxon>Escherichia</taxon>
    </lineage>
</organism>
<reference key="1">
    <citation type="journal article" date="1989" name="J. Bacteriol.">
        <title>Cloning and sequencing of an Escherichia coli gene, nlp, highly homologous to the ner genes of bacteriophages Mu and D108.</title>
        <authorList>
            <person name="Choi Y.-L."/>
            <person name="Nishida T."/>
            <person name="Kawamukai M."/>
            <person name="Utsumi R."/>
            <person name="Sakai H."/>
            <person name="Komano T."/>
        </authorList>
    </citation>
    <scope>NUCLEOTIDE SEQUENCE [GENOMIC DNA]</scope>
</reference>
<reference key="2">
    <citation type="journal article" date="1997" name="Science">
        <title>The complete genome sequence of Escherichia coli K-12.</title>
        <authorList>
            <person name="Blattner F.R."/>
            <person name="Plunkett G. III"/>
            <person name="Bloch C.A."/>
            <person name="Perna N.T."/>
            <person name="Burland V."/>
            <person name="Riley M."/>
            <person name="Collado-Vides J."/>
            <person name="Glasner J.D."/>
            <person name="Rode C.K."/>
            <person name="Mayhew G.F."/>
            <person name="Gregor J."/>
            <person name="Davis N.W."/>
            <person name="Kirkpatrick H.A."/>
            <person name="Goeden M.A."/>
            <person name="Rose D.J."/>
            <person name="Mau B."/>
            <person name="Shao Y."/>
        </authorList>
    </citation>
    <scope>NUCLEOTIDE SEQUENCE [LARGE SCALE GENOMIC DNA]</scope>
    <source>
        <strain>K12 / MG1655 / ATCC 47076</strain>
    </source>
</reference>
<reference key="3">
    <citation type="journal article" date="2006" name="Mol. Syst. Biol.">
        <title>Highly accurate genome sequences of Escherichia coli K-12 strains MG1655 and W3110.</title>
        <authorList>
            <person name="Hayashi K."/>
            <person name="Morooka N."/>
            <person name="Yamamoto Y."/>
            <person name="Fujita K."/>
            <person name="Isono K."/>
            <person name="Choi S."/>
            <person name="Ohtsubo E."/>
            <person name="Baba T."/>
            <person name="Wanner B.L."/>
            <person name="Mori H."/>
            <person name="Horiuchi T."/>
        </authorList>
    </citation>
    <scope>NUCLEOTIDE SEQUENCE [LARGE SCALE GENOMIC DNA]</scope>
    <source>
        <strain>K12 / W3110 / ATCC 27325 / DSM 5911</strain>
    </source>
</reference>
<proteinExistence type="inferred from homology"/>
<accession>P0ACH1</accession>
<accession>P18837</accession>
<accession>Q2M924</accession>
<comment type="function">
    <text evidence="1">This protein is involved in positive regulation of the metabolism of sugars.</text>
</comment>
<comment type="similarity">
    <text evidence="2">Belongs to the ner transcriptional regulatory family.</text>
</comment>
<dbReference type="EMBL" id="X68873">
    <property type="protein sequence ID" value="CAA48736.1"/>
    <property type="molecule type" value="Genomic_DNA"/>
</dbReference>
<dbReference type="EMBL" id="U18997">
    <property type="protein sequence ID" value="AAA57989.1"/>
    <property type="molecule type" value="Genomic_DNA"/>
</dbReference>
<dbReference type="EMBL" id="U00096">
    <property type="protein sequence ID" value="AAC76220.1"/>
    <property type="molecule type" value="Genomic_DNA"/>
</dbReference>
<dbReference type="EMBL" id="AP009048">
    <property type="protein sequence ID" value="BAE77232.1"/>
    <property type="molecule type" value="Genomic_DNA"/>
</dbReference>
<dbReference type="PIR" id="JV0027">
    <property type="entry name" value="BVECNP"/>
</dbReference>
<dbReference type="RefSeq" id="NP_417655.1">
    <property type="nucleotide sequence ID" value="NC_000913.3"/>
</dbReference>
<dbReference type="RefSeq" id="WP_000445413.1">
    <property type="nucleotide sequence ID" value="NZ_STEB01000012.1"/>
</dbReference>
<dbReference type="SMR" id="P0ACH1"/>
<dbReference type="BioGRID" id="4263464">
    <property type="interactions" value="97"/>
</dbReference>
<dbReference type="FunCoup" id="P0ACH1">
    <property type="interactions" value="36"/>
</dbReference>
<dbReference type="IntAct" id="P0ACH1">
    <property type="interactions" value="6"/>
</dbReference>
<dbReference type="STRING" id="511145.b3188"/>
<dbReference type="PaxDb" id="511145-b3188"/>
<dbReference type="EnsemblBacteria" id="AAC76220">
    <property type="protein sequence ID" value="AAC76220"/>
    <property type="gene ID" value="b3188"/>
</dbReference>
<dbReference type="GeneID" id="93778793"/>
<dbReference type="GeneID" id="947960"/>
<dbReference type="KEGG" id="ecj:JW3155"/>
<dbReference type="KEGG" id="eco:b3188"/>
<dbReference type="KEGG" id="ecoc:C3026_17355"/>
<dbReference type="PATRIC" id="fig|1411691.4.peg.3543"/>
<dbReference type="EchoBASE" id="EB0650"/>
<dbReference type="eggNOG" id="COG3423">
    <property type="taxonomic scope" value="Bacteria"/>
</dbReference>
<dbReference type="HOGENOM" id="CLU_162005_0_1_6"/>
<dbReference type="InParanoid" id="P0ACH1"/>
<dbReference type="OMA" id="YHDPITH"/>
<dbReference type="OrthoDB" id="5405994at2"/>
<dbReference type="PhylomeDB" id="P0ACH1"/>
<dbReference type="BioCyc" id="EcoCyc:EG10656-MONOMER"/>
<dbReference type="PRO" id="PR:P0ACH1"/>
<dbReference type="Proteomes" id="UP000000625">
    <property type="component" value="Chromosome"/>
</dbReference>
<dbReference type="GO" id="GO:0003677">
    <property type="term" value="F:DNA binding"/>
    <property type="evidence" value="ECO:0007669"/>
    <property type="project" value="UniProtKB-KW"/>
</dbReference>
<dbReference type="FunFam" id="1.10.260.40:FF:000017">
    <property type="entry name" value="DNA-binding transcriptional regulator SfsB"/>
    <property type="match status" value="1"/>
</dbReference>
<dbReference type="Gene3D" id="1.10.260.40">
    <property type="entry name" value="lambda repressor-like DNA-binding domains"/>
    <property type="match status" value="1"/>
</dbReference>
<dbReference type="InterPro" id="IPR010982">
    <property type="entry name" value="Lambda_DNA-bd_dom_sf"/>
</dbReference>
<dbReference type="InterPro" id="IPR038722">
    <property type="entry name" value="Ner_HTH_dom"/>
</dbReference>
<dbReference type="NCBIfam" id="NF007670">
    <property type="entry name" value="PRK10344.1"/>
    <property type="match status" value="1"/>
</dbReference>
<dbReference type="Pfam" id="PF13693">
    <property type="entry name" value="HTH_35"/>
    <property type="match status" value="1"/>
</dbReference>
<dbReference type="SUPFAM" id="SSF47413">
    <property type="entry name" value="lambda repressor-like DNA-binding domains"/>
    <property type="match status" value="1"/>
</dbReference>
<gene>
    <name type="primary">sfsB</name>
    <name type="synonym">nlp</name>
    <name type="synonym">sfs7</name>
    <name type="ordered locus">b3188</name>
    <name type="ordered locus">JW3155</name>
</gene>
<sequence length="92" mass="10495">MESNFIDWHPADIIAGLRKKGTSMAAESRRNGLSSSTLANALSRPWPKGEMIIAKALGTDPWVIWPSRYHDPQTHEFIDRTQLMRSYTKPKK</sequence>